<comment type="catalytic activity">
    <reaction evidence="1">
        <text>tRNA(His) + L-histidine + ATP = L-histidyl-tRNA(His) + AMP + diphosphate + H(+)</text>
        <dbReference type="Rhea" id="RHEA:17313"/>
        <dbReference type="Rhea" id="RHEA-COMP:9665"/>
        <dbReference type="Rhea" id="RHEA-COMP:9689"/>
        <dbReference type="ChEBI" id="CHEBI:15378"/>
        <dbReference type="ChEBI" id="CHEBI:30616"/>
        <dbReference type="ChEBI" id="CHEBI:33019"/>
        <dbReference type="ChEBI" id="CHEBI:57595"/>
        <dbReference type="ChEBI" id="CHEBI:78442"/>
        <dbReference type="ChEBI" id="CHEBI:78527"/>
        <dbReference type="ChEBI" id="CHEBI:456215"/>
        <dbReference type="EC" id="6.1.1.21"/>
    </reaction>
</comment>
<comment type="subunit">
    <text evidence="1">Homodimer.</text>
</comment>
<comment type="subcellular location">
    <subcellularLocation>
        <location evidence="1">Cytoplasm</location>
    </subcellularLocation>
</comment>
<comment type="similarity">
    <text evidence="1">Belongs to the class-II aminoacyl-tRNA synthetase family.</text>
</comment>
<protein>
    <recommendedName>
        <fullName evidence="1">Histidine--tRNA ligase</fullName>
        <ecNumber evidence="1">6.1.1.21</ecNumber>
    </recommendedName>
    <alternativeName>
        <fullName evidence="1">Histidyl-tRNA synthetase</fullName>
        <shortName evidence="1">HisRS</shortName>
    </alternativeName>
</protein>
<name>SYH_VIBVY</name>
<dbReference type="EC" id="6.1.1.21" evidence="1"/>
<dbReference type="EMBL" id="BA000037">
    <property type="protein sequence ID" value="BAC93531.1"/>
    <property type="molecule type" value="Genomic_DNA"/>
</dbReference>
<dbReference type="RefSeq" id="WP_011078525.1">
    <property type="nucleotide sequence ID" value="NC_005139.1"/>
</dbReference>
<dbReference type="SMR" id="Q7MNF0"/>
<dbReference type="STRING" id="672.VV93_v1c07130"/>
<dbReference type="KEGG" id="vvy:VV0767"/>
<dbReference type="eggNOG" id="COG0124">
    <property type="taxonomic scope" value="Bacteria"/>
</dbReference>
<dbReference type="HOGENOM" id="CLU_025113_1_1_6"/>
<dbReference type="Proteomes" id="UP000002675">
    <property type="component" value="Chromosome I"/>
</dbReference>
<dbReference type="GO" id="GO:0005737">
    <property type="term" value="C:cytoplasm"/>
    <property type="evidence" value="ECO:0007669"/>
    <property type="project" value="UniProtKB-SubCell"/>
</dbReference>
<dbReference type="GO" id="GO:0005524">
    <property type="term" value="F:ATP binding"/>
    <property type="evidence" value="ECO:0007669"/>
    <property type="project" value="UniProtKB-UniRule"/>
</dbReference>
<dbReference type="GO" id="GO:0004821">
    <property type="term" value="F:histidine-tRNA ligase activity"/>
    <property type="evidence" value="ECO:0007669"/>
    <property type="project" value="UniProtKB-UniRule"/>
</dbReference>
<dbReference type="GO" id="GO:0006427">
    <property type="term" value="P:histidyl-tRNA aminoacylation"/>
    <property type="evidence" value="ECO:0007669"/>
    <property type="project" value="UniProtKB-UniRule"/>
</dbReference>
<dbReference type="CDD" id="cd00773">
    <property type="entry name" value="HisRS-like_core"/>
    <property type="match status" value="1"/>
</dbReference>
<dbReference type="CDD" id="cd00859">
    <property type="entry name" value="HisRS_anticodon"/>
    <property type="match status" value="1"/>
</dbReference>
<dbReference type="FunFam" id="3.30.930.10:FF:000005">
    <property type="entry name" value="Histidine--tRNA ligase"/>
    <property type="match status" value="1"/>
</dbReference>
<dbReference type="Gene3D" id="3.40.50.800">
    <property type="entry name" value="Anticodon-binding domain"/>
    <property type="match status" value="1"/>
</dbReference>
<dbReference type="Gene3D" id="3.30.930.10">
    <property type="entry name" value="Bira Bifunctional Protein, Domain 2"/>
    <property type="match status" value="1"/>
</dbReference>
<dbReference type="HAMAP" id="MF_00127">
    <property type="entry name" value="His_tRNA_synth"/>
    <property type="match status" value="1"/>
</dbReference>
<dbReference type="InterPro" id="IPR006195">
    <property type="entry name" value="aa-tRNA-synth_II"/>
</dbReference>
<dbReference type="InterPro" id="IPR045864">
    <property type="entry name" value="aa-tRNA-synth_II/BPL/LPL"/>
</dbReference>
<dbReference type="InterPro" id="IPR004154">
    <property type="entry name" value="Anticodon-bd"/>
</dbReference>
<dbReference type="InterPro" id="IPR036621">
    <property type="entry name" value="Anticodon-bd_dom_sf"/>
</dbReference>
<dbReference type="InterPro" id="IPR015807">
    <property type="entry name" value="His-tRNA-ligase"/>
</dbReference>
<dbReference type="InterPro" id="IPR041715">
    <property type="entry name" value="HisRS-like_core"/>
</dbReference>
<dbReference type="InterPro" id="IPR004516">
    <property type="entry name" value="HisRS/HisZ"/>
</dbReference>
<dbReference type="InterPro" id="IPR033656">
    <property type="entry name" value="HisRS_anticodon"/>
</dbReference>
<dbReference type="NCBIfam" id="TIGR00442">
    <property type="entry name" value="hisS"/>
    <property type="match status" value="1"/>
</dbReference>
<dbReference type="PANTHER" id="PTHR43707:SF1">
    <property type="entry name" value="HISTIDINE--TRNA LIGASE, MITOCHONDRIAL-RELATED"/>
    <property type="match status" value="1"/>
</dbReference>
<dbReference type="PANTHER" id="PTHR43707">
    <property type="entry name" value="HISTIDYL-TRNA SYNTHETASE"/>
    <property type="match status" value="1"/>
</dbReference>
<dbReference type="Pfam" id="PF03129">
    <property type="entry name" value="HGTP_anticodon"/>
    <property type="match status" value="1"/>
</dbReference>
<dbReference type="Pfam" id="PF13393">
    <property type="entry name" value="tRNA-synt_His"/>
    <property type="match status" value="1"/>
</dbReference>
<dbReference type="PIRSF" id="PIRSF001549">
    <property type="entry name" value="His-tRNA_synth"/>
    <property type="match status" value="1"/>
</dbReference>
<dbReference type="SUPFAM" id="SSF52954">
    <property type="entry name" value="Class II aaRS ABD-related"/>
    <property type="match status" value="1"/>
</dbReference>
<dbReference type="SUPFAM" id="SSF55681">
    <property type="entry name" value="Class II aaRS and biotin synthetases"/>
    <property type="match status" value="1"/>
</dbReference>
<dbReference type="PROSITE" id="PS50862">
    <property type="entry name" value="AA_TRNA_LIGASE_II"/>
    <property type="match status" value="1"/>
</dbReference>
<gene>
    <name evidence="1" type="primary">hisS</name>
    <name type="ordered locus">VV0767</name>
</gene>
<feature type="chain" id="PRO_0000136294" description="Histidine--tRNA ligase">
    <location>
        <begin position="1"/>
        <end position="422"/>
    </location>
</feature>
<keyword id="KW-0030">Aminoacyl-tRNA synthetase</keyword>
<keyword id="KW-0067">ATP-binding</keyword>
<keyword id="KW-0963">Cytoplasm</keyword>
<keyword id="KW-0436">Ligase</keyword>
<keyword id="KW-0547">Nucleotide-binding</keyword>
<keyword id="KW-0648">Protein biosynthesis</keyword>
<reference key="1">
    <citation type="journal article" date="2003" name="Genome Res.">
        <title>Comparative genome analysis of Vibrio vulnificus, a marine pathogen.</title>
        <authorList>
            <person name="Chen C.-Y."/>
            <person name="Wu K.-M."/>
            <person name="Chang Y.-C."/>
            <person name="Chang C.-H."/>
            <person name="Tsai H.-C."/>
            <person name="Liao T.-L."/>
            <person name="Liu Y.-M."/>
            <person name="Chen H.-J."/>
            <person name="Shen A.B.-T."/>
            <person name="Li J.-C."/>
            <person name="Su T.-L."/>
            <person name="Shao C.-P."/>
            <person name="Lee C.-T."/>
            <person name="Hor L.-I."/>
            <person name="Tsai S.-F."/>
        </authorList>
    </citation>
    <scope>NUCLEOTIDE SEQUENCE [LARGE SCALE GENOMIC DNA]</scope>
    <source>
        <strain>YJ016</strain>
    </source>
</reference>
<sequence>MAKTIQAIRGMNDCLPTQSPLWQKLEGAVKNVISAYGYNEMRMPIVEMTHLFSRAIGEVTDVVEKEMYTFEDRNGDSLTLRPEGTAGCVRAGIENGLLYNQEQRVWYMGPMFRHERPQKGRYRQFHQCGVEVFGLNGPDVDAELIMMTARLWRELGIDKHVRLELNSIGSLEARANYRTALIAFLEQHIDVLDEDCKRRMHTNPLRVLDTKNPDVQAILGDAPRLSDYLDPESTQHFAGLCELLDAAGIEYTVNERLVRGLDYYNRTVFEWITESLGSQGTVCGGGRYDGLVEQLGGKATPAVGFAMGLERLVLMLETLELTDVRRSVDVYVVTAGEGTMMAGMKLAEQVREAIPGVRVMNHFGGGNFKKQFKRADKVGAVVALVLGENEVADNTVVLKDLAGGEQVTYSQQEIASKIAELI</sequence>
<organism>
    <name type="scientific">Vibrio vulnificus (strain YJ016)</name>
    <dbReference type="NCBI Taxonomy" id="196600"/>
    <lineage>
        <taxon>Bacteria</taxon>
        <taxon>Pseudomonadati</taxon>
        <taxon>Pseudomonadota</taxon>
        <taxon>Gammaproteobacteria</taxon>
        <taxon>Vibrionales</taxon>
        <taxon>Vibrionaceae</taxon>
        <taxon>Vibrio</taxon>
    </lineage>
</organism>
<proteinExistence type="inferred from homology"/>
<accession>Q7MNF0</accession>
<evidence type="ECO:0000255" key="1">
    <source>
        <dbReference type="HAMAP-Rule" id="MF_00127"/>
    </source>
</evidence>